<comment type="function">
    <text evidence="2">Catalyzes the transfer of the sulfoquinovose moiety from UDP-sulfoquinovose to diacylglycerol during sulfolipid biosynthesis (PubMed:11960029). Sulfolipid contributes to maintaining a negatively charged lipid-water interface, a requirement for proper function of photosynthetic membranes (PubMed:11960029). Sulfolipid may also function as a substitute of anionic phospholipids under phosphate-limited growth conditions (PubMed:11960029).</text>
</comment>
<comment type="catalytic activity">
    <reaction evidence="2">
        <text>UDP-alpha-D-6-sulfoquinovose + a 1,2-diacyl-sn-glycerol = a 6-sulfo-alpha-D-quinovosyldiacylglycerol + UDP + H(+)</text>
        <dbReference type="Rhea" id="RHEA:49468"/>
        <dbReference type="ChEBI" id="CHEBI:15378"/>
        <dbReference type="ChEBI" id="CHEBI:17815"/>
        <dbReference type="ChEBI" id="CHEBI:58223"/>
        <dbReference type="ChEBI" id="CHEBI:60009"/>
        <dbReference type="ChEBI" id="CHEBI:131487"/>
    </reaction>
</comment>
<comment type="pathway">
    <text evidence="2">Glycolipid biosynthesis.</text>
</comment>
<comment type="subcellular location">
    <subcellularLocation>
        <location evidence="1 3">Plastid</location>
        <location evidence="1 3">Chloroplast membrane</location>
        <topology evidence="1">Single-pass membrane protein</topology>
    </subcellularLocation>
</comment>
<comment type="induction">
    <text evidence="2 4">By phosphate depletion (PubMed:11960029). Repressed by phosphate (Pi) and phosphite (Phi), with a faster suppression in roots than in shoots (PubMed:25697796).</text>
</comment>
<comment type="disruption phenotype">
    <text evidence="2">Lack of sulfolipid leading to reduced growth under phosphate-limited growth conditions.</text>
</comment>
<comment type="similarity">
    <text evidence="6">Belongs to the glycosyltransferase group 1 family. Glycosyltransferase 4 subfamily.</text>
</comment>
<comment type="sequence caution" evidence="6">
    <conflict type="erroneous gene model prediction">
        <sequence resource="EMBL-CDS" id="CAB69850"/>
    </conflict>
</comment>
<reference key="1">
    <citation type="journal article" date="2002" name="Proc. Natl. Acad. Sci. U.S.A.">
        <title>Arabidopsis disrupted in SQD2 encoding sulfolipid synthase is impaired in phosphate-limited growth.</title>
        <authorList>
            <person name="Yu B."/>
            <person name="Xu C."/>
            <person name="Benning C."/>
        </authorList>
    </citation>
    <scope>NUCLEOTIDE SEQUENCE [MRNA]</scope>
    <scope>FUNCTION</scope>
    <scope>DISRUPTION PHENOTYPE</scope>
    <scope>CATALYTIC ACTIVITY</scope>
    <scope>PATHWAY</scope>
    <scope>INDUCTION BY PHOSPHATE DEPLETION</scope>
    <source>
        <strain>cv. Wassilewskija</strain>
    </source>
</reference>
<reference key="2">
    <citation type="journal article" date="2014" name="Plant J.">
        <title>The plant glycosyltransferase clone collection for functional genomics.</title>
        <authorList>
            <person name="Lao J."/>
            <person name="Oikawa A."/>
            <person name="Bromley J.R."/>
            <person name="McInerney P."/>
            <person name="Suttangkakul A."/>
            <person name="Smith-Moritz A.M."/>
            <person name="Plahar H."/>
            <person name="Chiu T.-Y."/>
            <person name="Gonzalez Fernandez-Nino S.M.G."/>
            <person name="Ebert B."/>
            <person name="Yang F."/>
            <person name="Christiansen K.M."/>
            <person name="Hansen S.F."/>
            <person name="Stonebloom S."/>
            <person name="Adams P.D."/>
            <person name="Ronald P.C."/>
            <person name="Hillson N.J."/>
            <person name="Hadi M.Z."/>
            <person name="Vega-Sanchez M.E."/>
            <person name="Loque D."/>
            <person name="Scheller H.V."/>
            <person name="Heazlewood J.L."/>
        </authorList>
    </citation>
    <scope>NUCLEOTIDE SEQUENCE [MRNA]</scope>
    <scope>GENE FAMILY</scope>
    <source>
        <strain>cv. Columbia</strain>
    </source>
</reference>
<reference key="3">
    <citation type="journal article" date="2000" name="Nature">
        <title>Sequence and analysis of chromosome 5 of the plant Arabidopsis thaliana.</title>
        <authorList>
            <person name="Tabata S."/>
            <person name="Kaneko T."/>
            <person name="Nakamura Y."/>
            <person name="Kotani H."/>
            <person name="Kato T."/>
            <person name="Asamizu E."/>
            <person name="Miyajima N."/>
            <person name="Sasamoto S."/>
            <person name="Kimura T."/>
            <person name="Hosouchi T."/>
            <person name="Kawashima K."/>
            <person name="Kohara M."/>
            <person name="Matsumoto M."/>
            <person name="Matsuno A."/>
            <person name="Muraki A."/>
            <person name="Nakayama S."/>
            <person name="Nakazaki N."/>
            <person name="Naruo K."/>
            <person name="Okumura S."/>
            <person name="Shinpo S."/>
            <person name="Takeuchi C."/>
            <person name="Wada T."/>
            <person name="Watanabe A."/>
            <person name="Yamada M."/>
            <person name="Yasuda M."/>
            <person name="Sato S."/>
            <person name="de la Bastide M."/>
            <person name="Huang E."/>
            <person name="Spiegel L."/>
            <person name="Gnoj L."/>
            <person name="O'Shaughnessy A."/>
            <person name="Preston R."/>
            <person name="Habermann K."/>
            <person name="Murray J."/>
            <person name="Johnson D."/>
            <person name="Rohlfing T."/>
            <person name="Nelson J."/>
            <person name="Stoneking T."/>
            <person name="Pepin K."/>
            <person name="Spieth J."/>
            <person name="Sekhon M."/>
            <person name="Armstrong J."/>
            <person name="Becker M."/>
            <person name="Belter E."/>
            <person name="Cordum H."/>
            <person name="Cordes M."/>
            <person name="Courtney L."/>
            <person name="Courtney W."/>
            <person name="Dante M."/>
            <person name="Du H."/>
            <person name="Edwards J."/>
            <person name="Fryman J."/>
            <person name="Haakensen B."/>
            <person name="Lamar E."/>
            <person name="Latreille P."/>
            <person name="Leonard S."/>
            <person name="Meyer R."/>
            <person name="Mulvaney E."/>
            <person name="Ozersky P."/>
            <person name="Riley A."/>
            <person name="Strowmatt C."/>
            <person name="Wagner-McPherson C."/>
            <person name="Wollam A."/>
            <person name="Yoakum M."/>
            <person name="Bell M."/>
            <person name="Dedhia N."/>
            <person name="Parnell L."/>
            <person name="Shah R."/>
            <person name="Rodriguez M."/>
            <person name="Hoon See L."/>
            <person name="Vil D."/>
            <person name="Baker J."/>
            <person name="Kirchoff K."/>
            <person name="Toth K."/>
            <person name="King L."/>
            <person name="Bahret A."/>
            <person name="Miller B."/>
            <person name="Marra M.A."/>
            <person name="Martienssen R."/>
            <person name="McCombie W.R."/>
            <person name="Wilson R.K."/>
            <person name="Murphy G."/>
            <person name="Bancroft I."/>
            <person name="Volckaert G."/>
            <person name="Wambutt R."/>
            <person name="Duesterhoeft A."/>
            <person name="Stiekema W."/>
            <person name="Pohl T."/>
            <person name="Entian K.-D."/>
            <person name="Terryn N."/>
            <person name="Hartley N."/>
            <person name="Bent E."/>
            <person name="Johnson S."/>
            <person name="Langham S.-A."/>
            <person name="McCullagh B."/>
            <person name="Robben J."/>
            <person name="Grymonprez B."/>
            <person name="Zimmermann W."/>
            <person name="Ramsperger U."/>
            <person name="Wedler H."/>
            <person name="Balke K."/>
            <person name="Wedler E."/>
            <person name="Peters S."/>
            <person name="van Staveren M."/>
            <person name="Dirkse W."/>
            <person name="Mooijman P."/>
            <person name="Klein Lankhorst R."/>
            <person name="Weitzenegger T."/>
            <person name="Bothe G."/>
            <person name="Rose M."/>
            <person name="Hauf J."/>
            <person name="Berneiser S."/>
            <person name="Hempel S."/>
            <person name="Feldpausch M."/>
            <person name="Lamberth S."/>
            <person name="Villarroel R."/>
            <person name="Gielen J."/>
            <person name="Ardiles W."/>
            <person name="Bents O."/>
            <person name="Lemcke K."/>
            <person name="Kolesov G."/>
            <person name="Mayer K.F.X."/>
            <person name="Rudd S."/>
            <person name="Schoof H."/>
            <person name="Schueller C."/>
            <person name="Zaccaria P."/>
            <person name="Mewes H.-W."/>
            <person name="Bevan M."/>
            <person name="Fransz P.F."/>
        </authorList>
    </citation>
    <scope>NUCLEOTIDE SEQUENCE [LARGE SCALE GENOMIC DNA]</scope>
    <source>
        <strain>cv. Columbia</strain>
    </source>
</reference>
<reference key="4">
    <citation type="journal article" date="2017" name="Plant J.">
        <title>Araport11: a complete reannotation of the Arabidopsis thaliana reference genome.</title>
        <authorList>
            <person name="Cheng C.Y."/>
            <person name="Krishnakumar V."/>
            <person name="Chan A.P."/>
            <person name="Thibaud-Nissen F."/>
            <person name="Schobel S."/>
            <person name="Town C.D."/>
        </authorList>
    </citation>
    <scope>GENOME REANNOTATION</scope>
    <source>
        <strain>cv. Columbia</strain>
    </source>
</reference>
<reference key="5">
    <citation type="journal article" date="2003" name="Science">
        <title>Empirical analysis of transcriptional activity in the Arabidopsis genome.</title>
        <authorList>
            <person name="Yamada K."/>
            <person name="Lim J."/>
            <person name="Dale J.M."/>
            <person name="Chen H."/>
            <person name="Shinn P."/>
            <person name="Palm C.J."/>
            <person name="Southwick A.M."/>
            <person name="Wu H.C."/>
            <person name="Kim C.J."/>
            <person name="Nguyen M."/>
            <person name="Pham P.K."/>
            <person name="Cheuk R.F."/>
            <person name="Karlin-Newmann G."/>
            <person name="Liu S.X."/>
            <person name="Lam B."/>
            <person name="Sakano H."/>
            <person name="Wu T."/>
            <person name="Yu G."/>
            <person name="Miranda M."/>
            <person name="Quach H.L."/>
            <person name="Tripp M."/>
            <person name="Chang C.H."/>
            <person name="Lee J.M."/>
            <person name="Toriumi M.J."/>
            <person name="Chan M.M."/>
            <person name="Tang C.C."/>
            <person name="Onodera C.S."/>
            <person name="Deng J.M."/>
            <person name="Akiyama K."/>
            <person name="Ansari Y."/>
            <person name="Arakawa T."/>
            <person name="Banh J."/>
            <person name="Banno F."/>
            <person name="Bowser L."/>
            <person name="Brooks S.Y."/>
            <person name="Carninci P."/>
            <person name="Chao Q."/>
            <person name="Choy N."/>
            <person name="Enju A."/>
            <person name="Goldsmith A.D."/>
            <person name="Gurjal M."/>
            <person name="Hansen N.F."/>
            <person name="Hayashizaki Y."/>
            <person name="Johnson-Hopson C."/>
            <person name="Hsuan V.W."/>
            <person name="Iida K."/>
            <person name="Karnes M."/>
            <person name="Khan S."/>
            <person name="Koesema E."/>
            <person name="Ishida J."/>
            <person name="Jiang P.X."/>
            <person name="Jones T."/>
            <person name="Kawai J."/>
            <person name="Kamiya A."/>
            <person name="Meyers C."/>
            <person name="Nakajima M."/>
            <person name="Narusaka M."/>
            <person name="Seki M."/>
            <person name="Sakurai T."/>
            <person name="Satou M."/>
            <person name="Tamse R."/>
            <person name="Vaysberg M."/>
            <person name="Wallender E.K."/>
            <person name="Wong C."/>
            <person name="Yamamura Y."/>
            <person name="Yuan S."/>
            <person name="Shinozaki K."/>
            <person name="Davis R.W."/>
            <person name="Theologis A."/>
            <person name="Ecker J.R."/>
        </authorList>
    </citation>
    <scope>NUCLEOTIDE SEQUENCE [LARGE SCALE MRNA]</scope>
    <source>
        <strain>cv. Columbia</strain>
    </source>
</reference>
<reference key="6">
    <citation type="journal article" date="2009" name="Plant Physiol.">
        <title>Large-scale Arabidopsis phosphoproteome profiling reveals novel chloroplast kinase substrates and phosphorylation networks.</title>
        <authorList>
            <person name="Reiland S."/>
            <person name="Messerli G."/>
            <person name="Baerenfaller K."/>
            <person name="Gerrits B."/>
            <person name="Endler A."/>
            <person name="Grossmann J."/>
            <person name="Gruissem W."/>
            <person name="Baginsky S."/>
        </authorList>
    </citation>
    <scope>PHOSPHORYLATION [LARGE SCALE ANALYSIS] AT SER-88</scope>
    <scope>IDENTIFICATION BY MASS SPECTROMETRY [LARGE SCALE ANALYSIS]</scope>
</reference>
<reference key="7">
    <citation type="journal article" date="2011" name="Biochemistry">
        <title>Lipid interacting regions in phosphate stress glycosyltransferase atDGD2 from Arabidopsis thaliana.</title>
        <authorList>
            <person name="Szpryngiel S."/>
            <person name="Ge C."/>
            <person name="Iakovleva I."/>
            <person name="Georgiev A."/>
            <person name="Lind J."/>
            <person name="Wieslander A."/>
            <person name="Maler L."/>
        </authorList>
    </citation>
    <scope>SUBCELLULAR LOCATION</scope>
</reference>
<reference key="8">
    <citation type="journal article" date="2015" name="J. Exp. Bot.">
        <title>Differentiating phosphate-dependent and phosphate-independent systemic phosphate-starvation response networks in Arabidopsis thaliana through the application of phosphite.</title>
        <authorList>
            <person name="Jost R."/>
            <person name="Pharmawati M."/>
            <person name="Lapis-Gaza H.R."/>
            <person name="Rossig C."/>
            <person name="Berkowitz O."/>
            <person name="Lambers H."/>
            <person name="Finnegan P.M."/>
        </authorList>
    </citation>
    <scope>REPRESSION BY PHOSPHITE AND PHOSPHATE</scope>
</reference>
<name>SQD2_ARATH</name>
<sequence>MTTLSSINLSIPPHLLPSTTNTCSSSSATSCSPPRSSSFVLHSPLSFGHRRLPISKKSKLRFCGVITKEAVSGSNDMTITQVREDDESEIDAPLLDPESLSKPRRIALFVEPSPFAYVSGYKNRFQNFIRYLREMGDEVIVVTTHEGVPEEFYGARVIGSRSFPCPYYQKVPLSLALSPRIISEIARFKPDIIHASSPGVMVFGALAIAKMLSVPIVMSYHTHVPVYIPRYTFSWLVKPMWSIIRFLHRAADLTLVPSAAIGKDLIAAGATAANQLRLWNKGVDSESFNPRFRSQEMRIRLSNGEPEKPLVIHVGRIGVEKSLELLKSVMDKLPEARIAFIGDGPYKEDLEKLFTGMPAVFTGTLQGDELSQAYASGDVFVMPSESETLGLVVLEAMSSGLPVVAARAGGIPDIIPEDQEGKTGFLFNPGDVEDCVTKLRTLLHDRETREIIGKAAREETEKYDWRAATTKIRNEQYSAAIWFWRKKKVHVLGPINWLIKRLFPVPEGNV</sequence>
<keyword id="KW-0150">Chloroplast</keyword>
<keyword id="KW-0328">Glycosyltransferase</keyword>
<keyword id="KW-0444">Lipid biosynthesis</keyword>
<keyword id="KW-0443">Lipid metabolism</keyword>
<keyword id="KW-0472">Membrane</keyword>
<keyword id="KW-0597">Phosphoprotein</keyword>
<keyword id="KW-0934">Plastid</keyword>
<keyword id="KW-1185">Reference proteome</keyword>
<keyword id="KW-0808">Transferase</keyword>
<keyword id="KW-0809">Transit peptide</keyword>
<keyword id="KW-0812">Transmembrane</keyword>
<keyword id="KW-1133">Transmembrane helix</keyword>
<gene>
    <name evidence="5" type="primary">SQD2</name>
    <name evidence="8" type="ordered locus">At5g01220</name>
    <name evidence="9" type="ORF">F7J8.200</name>
</gene>
<proteinExistence type="evidence at protein level"/>
<feature type="transit peptide" description="Chloroplast" evidence="1">
    <location>
        <begin position="1"/>
        <end position="83"/>
    </location>
</feature>
<feature type="chain" id="PRO_0000432457" description="Sulfoquinovosyl transferase SQD2" evidence="1">
    <location>
        <begin position="84"/>
        <end position="510"/>
    </location>
</feature>
<feature type="transmembrane region" description="Helical" evidence="1">
    <location>
        <begin position="198"/>
        <end position="218"/>
    </location>
</feature>
<feature type="modified residue" description="Phosphoserine" evidence="10">
    <location>
        <position position="88"/>
    </location>
</feature>
<organism>
    <name type="scientific">Arabidopsis thaliana</name>
    <name type="common">Mouse-ear cress</name>
    <dbReference type="NCBI Taxonomy" id="3702"/>
    <lineage>
        <taxon>Eukaryota</taxon>
        <taxon>Viridiplantae</taxon>
        <taxon>Streptophyta</taxon>
        <taxon>Embryophyta</taxon>
        <taxon>Tracheophyta</taxon>
        <taxon>Spermatophyta</taxon>
        <taxon>Magnoliopsida</taxon>
        <taxon>eudicotyledons</taxon>
        <taxon>Gunneridae</taxon>
        <taxon>Pentapetalae</taxon>
        <taxon>rosids</taxon>
        <taxon>malvids</taxon>
        <taxon>Brassicales</taxon>
        <taxon>Brassicaceae</taxon>
        <taxon>Camelineae</taxon>
        <taxon>Arabidopsis</taxon>
    </lineage>
</organism>
<accession>Q8S4F6</accession>
<accession>Q941K9</accession>
<accession>Q9LFB4</accession>
<dbReference type="EC" id="2.4.1.-" evidence="7"/>
<dbReference type="EMBL" id="AF454354">
    <property type="protein sequence ID" value="AAM18913.1"/>
    <property type="molecule type" value="mRNA"/>
</dbReference>
<dbReference type="EMBL" id="KJ138712">
    <property type="protein sequence ID" value="AHL38652.1"/>
    <property type="molecule type" value="mRNA"/>
</dbReference>
<dbReference type="EMBL" id="AL137189">
    <property type="protein sequence ID" value="CAB69850.1"/>
    <property type="status" value="ALT_SEQ"/>
    <property type="molecule type" value="Genomic_DNA"/>
</dbReference>
<dbReference type="EMBL" id="CP002688">
    <property type="protein sequence ID" value="AED90311.1"/>
    <property type="molecule type" value="Genomic_DNA"/>
</dbReference>
<dbReference type="EMBL" id="AY045961">
    <property type="protein sequence ID" value="AAK76635.1"/>
    <property type="molecule type" value="mRNA"/>
</dbReference>
<dbReference type="EMBL" id="BT005796">
    <property type="protein sequence ID" value="AAO64198.1"/>
    <property type="molecule type" value="mRNA"/>
</dbReference>
<dbReference type="PIR" id="T45962">
    <property type="entry name" value="T45962"/>
</dbReference>
<dbReference type="RefSeq" id="NP_568085.2">
    <property type="nucleotide sequence ID" value="NM_120200.4"/>
</dbReference>
<dbReference type="SMR" id="Q8S4F6"/>
<dbReference type="FunCoup" id="Q8S4F6">
    <property type="interactions" value="33"/>
</dbReference>
<dbReference type="STRING" id="3702.Q8S4F6"/>
<dbReference type="CAZy" id="GT4">
    <property type="family name" value="Glycosyltransferase Family 4"/>
</dbReference>
<dbReference type="iPTMnet" id="Q8S4F6"/>
<dbReference type="PaxDb" id="3702-AT5G01220.1"/>
<dbReference type="ProMEX" id="Q8S4F6"/>
<dbReference type="ProteomicsDB" id="226855"/>
<dbReference type="EnsemblPlants" id="AT5G01220.1">
    <property type="protein sequence ID" value="AT5G01220.1"/>
    <property type="gene ID" value="AT5G01220"/>
</dbReference>
<dbReference type="GeneID" id="831888"/>
<dbReference type="Gramene" id="AT5G01220.1">
    <property type="protein sequence ID" value="AT5G01220.1"/>
    <property type="gene ID" value="AT5G01220"/>
</dbReference>
<dbReference type="KEGG" id="ath:AT5G01220"/>
<dbReference type="Araport" id="AT5G01220"/>
<dbReference type="TAIR" id="AT5G01220">
    <property type="gene designation" value="SQD2"/>
</dbReference>
<dbReference type="eggNOG" id="KOG1111">
    <property type="taxonomic scope" value="Eukaryota"/>
</dbReference>
<dbReference type="HOGENOM" id="CLU_009583_20_0_1"/>
<dbReference type="InParanoid" id="Q8S4F6"/>
<dbReference type="OMA" id="HTNFPQY"/>
<dbReference type="PhylomeDB" id="Q8S4F6"/>
<dbReference type="BioCyc" id="MetaCyc:MONOMER-1202"/>
<dbReference type="PRO" id="PR:Q8S4F6"/>
<dbReference type="Proteomes" id="UP000006548">
    <property type="component" value="Chromosome 5"/>
</dbReference>
<dbReference type="ExpressionAtlas" id="Q8S4F6">
    <property type="expression patterns" value="baseline and differential"/>
</dbReference>
<dbReference type="GO" id="GO:0009507">
    <property type="term" value="C:chloroplast"/>
    <property type="evidence" value="ECO:0007005"/>
    <property type="project" value="TAIR"/>
</dbReference>
<dbReference type="GO" id="GO:0009941">
    <property type="term" value="C:chloroplast envelope"/>
    <property type="evidence" value="ECO:0007005"/>
    <property type="project" value="TAIR"/>
</dbReference>
<dbReference type="GO" id="GO:0031969">
    <property type="term" value="C:chloroplast membrane"/>
    <property type="evidence" value="ECO:0007669"/>
    <property type="project" value="UniProtKB-SubCell"/>
</dbReference>
<dbReference type="GO" id="GO:0005886">
    <property type="term" value="C:plasma membrane"/>
    <property type="evidence" value="ECO:0007005"/>
    <property type="project" value="TAIR"/>
</dbReference>
<dbReference type="GO" id="GO:0009536">
    <property type="term" value="C:plastid"/>
    <property type="evidence" value="ECO:0007005"/>
    <property type="project" value="TAIR"/>
</dbReference>
<dbReference type="GO" id="GO:0008194">
    <property type="term" value="F:UDP-glycosyltransferase activity"/>
    <property type="evidence" value="ECO:0000314"/>
    <property type="project" value="TAIR"/>
</dbReference>
<dbReference type="GO" id="GO:0046510">
    <property type="term" value="F:UDP-sulfoquinovose:DAG sulfoquinovosyltransferase activity"/>
    <property type="evidence" value="ECO:0000314"/>
    <property type="project" value="UniProtKB"/>
</dbReference>
<dbReference type="GO" id="GO:0016036">
    <property type="term" value="P:cellular response to phosphate starvation"/>
    <property type="evidence" value="ECO:0000270"/>
    <property type="project" value="UniProtKB"/>
</dbReference>
<dbReference type="GO" id="GO:0009247">
    <property type="term" value="P:glycolipid biosynthetic process"/>
    <property type="evidence" value="ECO:0000314"/>
    <property type="project" value="TAIR"/>
</dbReference>
<dbReference type="GO" id="GO:0046506">
    <property type="term" value="P:sulfolipid biosynthetic process"/>
    <property type="evidence" value="ECO:0000315"/>
    <property type="project" value="UniProtKB"/>
</dbReference>
<dbReference type="CDD" id="cd03814">
    <property type="entry name" value="GT4-like"/>
    <property type="match status" value="1"/>
</dbReference>
<dbReference type="FunFam" id="3.40.50.2000:FF:000044">
    <property type="entry name" value="Sulfoquinovosyl transferase SQD2"/>
    <property type="match status" value="1"/>
</dbReference>
<dbReference type="FunFam" id="3.40.50.2000:FF:000062">
    <property type="entry name" value="sulfoquinovosyl transferase SQD2"/>
    <property type="match status" value="1"/>
</dbReference>
<dbReference type="Gene3D" id="3.40.50.2000">
    <property type="entry name" value="Glycogen Phosphorylase B"/>
    <property type="match status" value="2"/>
</dbReference>
<dbReference type="InterPro" id="IPR001296">
    <property type="entry name" value="Glyco_trans_1"/>
</dbReference>
<dbReference type="InterPro" id="IPR028098">
    <property type="entry name" value="Glyco_trans_4-like_N"/>
</dbReference>
<dbReference type="InterPro" id="IPR050194">
    <property type="entry name" value="Glycosyltransferase_grp1"/>
</dbReference>
<dbReference type="PANTHER" id="PTHR45947">
    <property type="entry name" value="SULFOQUINOVOSYL TRANSFERASE SQD2"/>
    <property type="match status" value="1"/>
</dbReference>
<dbReference type="PANTHER" id="PTHR45947:SF3">
    <property type="entry name" value="SULFOQUINOVOSYL TRANSFERASE SQD2"/>
    <property type="match status" value="1"/>
</dbReference>
<dbReference type="Pfam" id="PF13439">
    <property type="entry name" value="Glyco_transf_4"/>
    <property type="match status" value="1"/>
</dbReference>
<dbReference type="Pfam" id="PF00534">
    <property type="entry name" value="Glycos_transf_1"/>
    <property type="match status" value="1"/>
</dbReference>
<dbReference type="SUPFAM" id="SSF53756">
    <property type="entry name" value="UDP-Glycosyltransferase/glycogen phosphorylase"/>
    <property type="match status" value="1"/>
</dbReference>
<evidence type="ECO:0000255" key="1"/>
<evidence type="ECO:0000269" key="2">
    <source>
    </source>
</evidence>
<evidence type="ECO:0000269" key="3">
    <source>
    </source>
</evidence>
<evidence type="ECO:0000269" key="4">
    <source>
    </source>
</evidence>
<evidence type="ECO:0000303" key="5">
    <source>
    </source>
</evidence>
<evidence type="ECO:0000305" key="6"/>
<evidence type="ECO:0000305" key="7">
    <source>
    </source>
</evidence>
<evidence type="ECO:0000312" key="8">
    <source>
        <dbReference type="Araport" id="AT5G01220"/>
    </source>
</evidence>
<evidence type="ECO:0000312" key="9">
    <source>
        <dbReference type="EMBL" id="CAB69850.1"/>
    </source>
</evidence>
<evidence type="ECO:0007744" key="10">
    <source>
    </source>
</evidence>
<protein>
    <recommendedName>
        <fullName evidence="5">Sulfoquinovosyl transferase SQD2</fullName>
        <ecNumber evidence="7">2.4.1.-</ecNumber>
    </recommendedName>
    <alternativeName>
        <fullName evidence="5">Protein SULFOQUINOVOSYLDIACYLGLYCEROL 2</fullName>
    </alternativeName>
    <alternativeName>
        <fullName evidence="7">Sulfolipid synthase SQD2</fullName>
    </alternativeName>
    <alternativeName>
        <fullName evidence="6">UDP-sulfoquinovose: diacylglycerol alpha-sulfoquinovosyltransferase SQD2</fullName>
    </alternativeName>
</protein>